<gene>
    <name evidence="1" type="primary">rutD</name>
    <name type="ordered locus">METDI2409</name>
</gene>
<feature type="chain" id="PRO_0000402972" description="Putative carbamate hydrolase RutD">
    <location>
        <begin position="1"/>
        <end position="260"/>
    </location>
</feature>
<feature type="domain" description="AB hydrolase-1" evidence="1">
    <location>
        <begin position="17"/>
        <end position="120"/>
    </location>
</feature>
<comment type="function">
    <text evidence="1">Involved in pyrimidine catabolism. May facilitate the hydrolysis of carbamate, a reaction that can also occur spontaneously.</text>
</comment>
<comment type="catalytic activity">
    <reaction evidence="1">
        <text>carbamate + 2 H(+) = NH4(+) + CO2</text>
        <dbReference type="Rhea" id="RHEA:15649"/>
        <dbReference type="ChEBI" id="CHEBI:13941"/>
        <dbReference type="ChEBI" id="CHEBI:15378"/>
        <dbReference type="ChEBI" id="CHEBI:16526"/>
        <dbReference type="ChEBI" id="CHEBI:28938"/>
    </reaction>
</comment>
<comment type="similarity">
    <text evidence="1">Belongs to the AB hydrolase superfamily. Hydrolase RutD family.</text>
</comment>
<keyword id="KW-0378">Hydrolase</keyword>
<organism>
    <name type="scientific">Methylorubrum extorquens (strain DSM 6343 / CIP 106787 / DM4)</name>
    <name type="common">Methylobacterium extorquens</name>
    <dbReference type="NCBI Taxonomy" id="661410"/>
    <lineage>
        <taxon>Bacteria</taxon>
        <taxon>Pseudomonadati</taxon>
        <taxon>Pseudomonadota</taxon>
        <taxon>Alphaproteobacteria</taxon>
        <taxon>Hyphomicrobiales</taxon>
        <taxon>Methylobacteriaceae</taxon>
        <taxon>Methylorubrum</taxon>
    </lineage>
</organism>
<evidence type="ECO:0000255" key="1">
    <source>
        <dbReference type="HAMAP-Rule" id="MF_00832"/>
    </source>
</evidence>
<proteinExistence type="inferred from homology"/>
<protein>
    <recommendedName>
        <fullName evidence="1">Putative carbamate hydrolase RutD</fullName>
        <ecNumber evidence="1">3.5.1.-</ecNumber>
    </recommendedName>
    <alternativeName>
        <fullName evidence="1">Aminohydrolase</fullName>
    </alternativeName>
</protein>
<dbReference type="EC" id="3.5.1.-" evidence="1"/>
<dbReference type="EMBL" id="FP103042">
    <property type="protein sequence ID" value="CAX24012.1"/>
    <property type="molecule type" value="Genomic_DNA"/>
</dbReference>
<dbReference type="RefSeq" id="WP_015822303.1">
    <property type="nucleotide sequence ID" value="NC_012988.1"/>
</dbReference>
<dbReference type="SMR" id="C7CM33"/>
<dbReference type="ESTHER" id="meted-rutd">
    <property type="family name" value="RutD"/>
</dbReference>
<dbReference type="GeneID" id="72989392"/>
<dbReference type="KEGG" id="mdi:METDI2409"/>
<dbReference type="HOGENOM" id="CLU_020336_50_1_5"/>
<dbReference type="Proteomes" id="UP000008070">
    <property type="component" value="Chromosome"/>
</dbReference>
<dbReference type="GO" id="GO:0016020">
    <property type="term" value="C:membrane"/>
    <property type="evidence" value="ECO:0007669"/>
    <property type="project" value="TreeGrafter"/>
</dbReference>
<dbReference type="GO" id="GO:0016811">
    <property type="term" value="F:hydrolase activity, acting on carbon-nitrogen (but not peptide) bonds, in linear amides"/>
    <property type="evidence" value="ECO:0007669"/>
    <property type="project" value="InterPro"/>
</dbReference>
<dbReference type="GO" id="GO:0047372">
    <property type="term" value="F:monoacylglycerol lipase activity"/>
    <property type="evidence" value="ECO:0007669"/>
    <property type="project" value="TreeGrafter"/>
</dbReference>
<dbReference type="GO" id="GO:0046464">
    <property type="term" value="P:acylglycerol catabolic process"/>
    <property type="evidence" value="ECO:0007669"/>
    <property type="project" value="TreeGrafter"/>
</dbReference>
<dbReference type="GO" id="GO:0019740">
    <property type="term" value="P:nitrogen utilization"/>
    <property type="evidence" value="ECO:0007669"/>
    <property type="project" value="UniProtKB-UniRule"/>
</dbReference>
<dbReference type="GO" id="GO:0006212">
    <property type="term" value="P:uracil catabolic process"/>
    <property type="evidence" value="ECO:0007669"/>
    <property type="project" value="UniProtKB-UniRule"/>
</dbReference>
<dbReference type="Gene3D" id="3.40.50.1820">
    <property type="entry name" value="alpha/beta hydrolase"/>
    <property type="match status" value="1"/>
</dbReference>
<dbReference type="HAMAP" id="MF_00832">
    <property type="entry name" value="RutD"/>
    <property type="match status" value="1"/>
</dbReference>
<dbReference type="InterPro" id="IPR000073">
    <property type="entry name" value="AB_hydrolase_1"/>
</dbReference>
<dbReference type="InterPro" id="IPR029058">
    <property type="entry name" value="AB_hydrolase_fold"/>
</dbReference>
<dbReference type="InterPro" id="IPR050266">
    <property type="entry name" value="AB_hydrolase_sf"/>
</dbReference>
<dbReference type="InterPro" id="IPR019913">
    <property type="entry name" value="Pyrimidine_utilisation_RutD"/>
</dbReference>
<dbReference type="NCBIfam" id="TIGR03611">
    <property type="entry name" value="RutD"/>
    <property type="match status" value="1"/>
</dbReference>
<dbReference type="PANTHER" id="PTHR43798">
    <property type="entry name" value="MONOACYLGLYCEROL LIPASE"/>
    <property type="match status" value="1"/>
</dbReference>
<dbReference type="PANTHER" id="PTHR43798:SF5">
    <property type="entry name" value="MONOACYLGLYCEROL LIPASE ABHD6"/>
    <property type="match status" value="1"/>
</dbReference>
<dbReference type="Pfam" id="PF00561">
    <property type="entry name" value="Abhydrolase_1"/>
    <property type="match status" value="1"/>
</dbReference>
<dbReference type="PRINTS" id="PR00111">
    <property type="entry name" value="ABHYDROLASE"/>
</dbReference>
<dbReference type="SUPFAM" id="SSF53474">
    <property type="entry name" value="alpha/beta-Hydrolases"/>
    <property type="match status" value="1"/>
</dbReference>
<accession>C7CM33</accession>
<name>RUTD_METED</name>
<reference key="1">
    <citation type="journal article" date="2009" name="PLoS ONE">
        <title>Methylobacterium genome sequences: a reference blueprint to investigate microbial metabolism of C1 compounds from natural and industrial sources.</title>
        <authorList>
            <person name="Vuilleumier S."/>
            <person name="Chistoserdova L."/>
            <person name="Lee M.-C."/>
            <person name="Bringel F."/>
            <person name="Lajus A."/>
            <person name="Zhou Y."/>
            <person name="Gourion B."/>
            <person name="Barbe V."/>
            <person name="Chang J."/>
            <person name="Cruveiller S."/>
            <person name="Dossat C."/>
            <person name="Gillett W."/>
            <person name="Gruffaz C."/>
            <person name="Haugen E."/>
            <person name="Hourcade E."/>
            <person name="Levy R."/>
            <person name="Mangenot S."/>
            <person name="Muller E."/>
            <person name="Nadalig T."/>
            <person name="Pagni M."/>
            <person name="Penny C."/>
            <person name="Peyraud R."/>
            <person name="Robinson D.G."/>
            <person name="Roche D."/>
            <person name="Rouy Z."/>
            <person name="Saenampechek C."/>
            <person name="Salvignol G."/>
            <person name="Vallenet D."/>
            <person name="Wu Z."/>
            <person name="Marx C.J."/>
            <person name="Vorholt J.A."/>
            <person name="Olson M.V."/>
            <person name="Kaul R."/>
            <person name="Weissenbach J."/>
            <person name="Medigue C."/>
            <person name="Lidstrom M.E."/>
        </authorList>
    </citation>
    <scope>NUCLEOTIDE SEQUENCE [LARGE SCALE GENOMIC DNA]</scope>
    <source>
        <strain>DSM 6343 / CIP 106787 / DM4</strain>
    </source>
</reference>
<sequence length="260" mass="27471">MAAPVHHEVHGPAGGRTVLLSPGLGGSAHYFAPQVPVLAERFRVVTYDHRGTGRSPGPLEPGHDIAAMARDVLDLLDHLGIGTADIVGHALGGLIALQLALTHPERVGRIVVINGWAVMDPATRRCFAARKALLRHAGPEAFVRAQAIFLYPAPWLSENAARVANDEAQALAHFPGEETVLARISALEAFDGTAALARIPHETLLMAARDDVLVPFTASDILAAGLPNARLDLAPEGGHAHSVTRSASFNRTLLDFLASP</sequence>